<reference key="1">
    <citation type="journal article" date="2009" name="J. Bacteriol.">
        <title>Complete and draft genome sequences of six members of the Aquificales.</title>
        <authorList>
            <person name="Reysenbach A.-L."/>
            <person name="Hamamura N."/>
            <person name="Podar M."/>
            <person name="Griffiths E."/>
            <person name="Ferreira S."/>
            <person name="Hochstein R."/>
            <person name="Heidelberg J."/>
            <person name="Johnson J."/>
            <person name="Mead D."/>
            <person name="Pohorille A."/>
            <person name="Sarmiento M."/>
            <person name="Schweighofer K."/>
            <person name="Seshadri R."/>
            <person name="Voytek M.A."/>
        </authorList>
    </citation>
    <scope>NUCLEOTIDE SEQUENCE [LARGE SCALE GENOMIC DNA]</scope>
    <source>
        <strain>YO3AOP1</strain>
    </source>
</reference>
<evidence type="ECO:0000255" key="1">
    <source>
        <dbReference type="HAMAP-Rule" id="MF_00382"/>
    </source>
</evidence>
<evidence type="ECO:0000305" key="2"/>
<dbReference type="EMBL" id="CP001080">
    <property type="protein sequence ID" value="ACD67283.1"/>
    <property type="molecule type" value="Genomic_DNA"/>
</dbReference>
<dbReference type="RefSeq" id="WP_012460339.1">
    <property type="nucleotide sequence ID" value="NC_010730.1"/>
</dbReference>
<dbReference type="SMR" id="B2V6V1"/>
<dbReference type="STRING" id="436114.SYO3AOP1_1685"/>
<dbReference type="KEGG" id="sul:SYO3AOP1_1685"/>
<dbReference type="eggNOG" id="COG0292">
    <property type="taxonomic scope" value="Bacteria"/>
</dbReference>
<dbReference type="HOGENOM" id="CLU_123265_0_1_0"/>
<dbReference type="GO" id="GO:1990904">
    <property type="term" value="C:ribonucleoprotein complex"/>
    <property type="evidence" value="ECO:0007669"/>
    <property type="project" value="UniProtKB-KW"/>
</dbReference>
<dbReference type="GO" id="GO:0005840">
    <property type="term" value="C:ribosome"/>
    <property type="evidence" value="ECO:0007669"/>
    <property type="project" value="UniProtKB-KW"/>
</dbReference>
<dbReference type="GO" id="GO:0019843">
    <property type="term" value="F:rRNA binding"/>
    <property type="evidence" value="ECO:0007669"/>
    <property type="project" value="UniProtKB-UniRule"/>
</dbReference>
<dbReference type="GO" id="GO:0003735">
    <property type="term" value="F:structural constituent of ribosome"/>
    <property type="evidence" value="ECO:0007669"/>
    <property type="project" value="InterPro"/>
</dbReference>
<dbReference type="GO" id="GO:0000027">
    <property type="term" value="P:ribosomal large subunit assembly"/>
    <property type="evidence" value="ECO:0007669"/>
    <property type="project" value="UniProtKB-UniRule"/>
</dbReference>
<dbReference type="GO" id="GO:0006412">
    <property type="term" value="P:translation"/>
    <property type="evidence" value="ECO:0007669"/>
    <property type="project" value="InterPro"/>
</dbReference>
<dbReference type="CDD" id="cd07026">
    <property type="entry name" value="Ribosomal_L20"/>
    <property type="match status" value="1"/>
</dbReference>
<dbReference type="FunFam" id="1.10.1900.20:FF:000001">
    <property type="entry name" value="50S ribosomal protein L20"/>
    <property type="match status" value="1"/>
</dbReference>
<dbReference type="Gene3D" id="6.10.160.10">
    <property type="match status" value="1"/>
</dbReference>
<dbReference type="Gene3D" id="1.10.1900.20">
    <property type="entry name" value="Ribosomal protein L20"/>
    <property type="match status" value="1"/>
</dbReference>
<dbReference type="HAMAP" id="MF_00382">
    <property type="entry name" value="Ribosomal_bL20"/>
    <property type="match status" value="1"/>
</dbReference>
<dbReference type="InterPro" id="IPR005813">
    <property type="entry name" value="Ribosomal_bL20"/>
</dbReference>
<dbReference type="InterPro" id="IPR049946">
    <property type="entry name" value="RIBOSOMAL_L20_CS"/>
</dbReference>
<dbReference type="InterPro" id="IPR035566">
    <property type="entry name" value="Ribosomal_protein_bL20_C"/>
</dbReference>
<dbReference type="NCBIfam" id="TIGR01032">
    <property type="entry name" value="rplT_bact"/>
    <property type="match status" value="1"/>
</dbReference>
<dbReference type="PANTHER" id="PTHR10986">
    <property type="entry name" value="39S RIBOSOMAL PROTEIN L20"/>
    <property type="match status" value="1"/>
</dbReference>
<dbReference type="Pfam" id="PF00453">
    <property type="entry name" value="Ribosomal_L20"/>
    <property type="match status" value="1"/>
</dbReference>
<dbReference type="PRINTS" id="PR00062">
    <property type="entry name" value="RIBOSOMALL20"/>
</dbReference>
<dbReference type="SUPFAM" id="SSF74731">
    <property type="entry name" value="Ribosomal protein L20"/>
    <property type="match status" value="1"/>
</dbReference>
<dbReference type="PROSITE" id="PS00937">
    <property type="entry name" value="RIBOSOMAL_L20"/>
    <property type="match status" value="1"/>
</dbReference>
<protein>
    <recommendedName>
        <fullName evidence="1">Large ribosomal subunit protein bL20</fullName>
    </recommendedName>
    <alternativeName>
        <fullName evidence="2">50S ribosomal protein L20</fullName>
    </alternativeName>
</protein>
<sequence length="118" mass="13683">MRVKGPSSKKHKKKILKLAKGYYGQKHRSYRRAKEQVMHSLNYAYRDRKDRKRQFRALWITRINAAARLNGLSYSQFINGLKKSGIELDRKILADMAVNDMEAFAKLVETAKKALQAA</sequence>
<proteinExistence type="inferred from homology"/>
<comment type="function">
    <text evidence="1">Binds directly to 23S ribosomal RNA and is necessary for the in vitro assembly process of the 50S ribosomal subunit. It is not involved in the protein synthesizing functions of that subunit.</text>
</comment>
<comment type="similarity">
    <text evidence="1">Belongs to the bacterial ribosomal protein bL20 family.</text>
</comment>
<name>RL20_SULSY</name>
<gene>
    <name evidence="1" type="primary">rplT</name>
    <name type="ordered locus">SYO3AOP1_1685</name>
</gene>
<accession>B2V6V1</accession>
<organism>
    <name type="scientific">Sulfurihydrogenibium sp. (strain YO3AOP1)</name>
    <dbReference type="NCBI Taxonomy" id="436114"/>
    <lineage>
        <taxon>Bacteria</taxon>
        <taxon>Pseudomonadati</taxon>
        <taxon>Aquificota</taxon>
        <taxon>Aquificia</taxon>
        <taxon>Aquificales</taxon>
        <taxon>Hydrogenothermaceae</taxon>
        <taxon>Sulfurihydrogenibium</taxon>
    </lineage>
</organism>
<feature type="chain" id="PRO_1000205727" description="Large ribosomal subunit protein bL20">
    <location>
        <begin position="1"/>
        <end position="118"/>
    </location>
</feature>
<keyword id="KW-0687">Ribonucleoprotein</keyword>
<keyword id="KW-0689">Ribosomal protein</keyword>
<keyword id="KW-0694">RNA-binding</keyword>
<keyword id="KW-0699">rRNA-binding</keyword>